<proteinExistence type="inferred from homology"/>
<feature type="chain" id="PRO_1000193698" description="Glutamate 5-kinase">
    <location>
        <begin position="1"/>
        <end position="276"/>
    </location>
</feature>
<feature type="binding site" evidence="1">
    <location>
        <position position="14"/>
    </location>
    <ligand>
        <name>ATP</name>
        <dbReference type="ChEBI" id="CHEBI:30616"/>
    </ligand>
</feature>
<feature type="binding site" evidence="1">
    <location>
        <position position="54"/>
    </location>
    <ligand>
        <name>substrate</name>
    </ligand>
</feature>
<feature type="binding site" evidence="1">
    <location>
        <position position="141"/>
    </location>
    <ligand>
        <name>substrate</name>
    </ligand>
</feature>
<feature type="binding site" evidence="1">
    <location>
        <position position="157"/>
    </location>
    <ligand>
        <name>substrate</name>
    </ligand>
</feature>
<feature type="binding site" evidence="1">
    <location>
        <begin position="177"/>
        <end position="178"/>
    </location>
    <ligand>
        <name>ATP</name>
        <dbReference type="ChEBI" id="CHEBI:30616"/>
    </ligand>
</feature>
<feature type="binding site" evidence="1">
    <location>
        <begin position="219"/>
        <end position="225"/>
    </location>
    <ligand>
        <name>ATP</name>
        <dbReference type="ChEBI" id="CHEBI:30616"/>
    </ligand>
</feature>
<organism>
    <name type="scientific">Listeria monocytogenes serotype 4a (strain HCC23)</name>
    <dbReference type="NCBI Taxonomy" id="552536"/>
    <lineage>
        <taxon>Bacteria</taxon>
        <taxon>Bacillati</taxon>
        <taxon>Bacillota</taxon>
        <taxon>Bacilli</taxon>
        <taxon>Bacillales</taxon>
        <taxon>Listeriaceae</taxon>
        <taxon>Listeria</taxon>
    </lineage>
</organism>
<evidence type="ECO:0000255" key="1">
    <source>
        <dbReference type="HAMAP-Rule" id="MF_00456"/>
    </source>
</evidence>
<comment type="function">
    <text evidence="1">Catalyzes the transfer of a phosphate group to glutamate to form L-glutamate 5-phosphate.</text>
</comment>
<comment type="catalytic activity">
    <reaction evidence="1">
        <text>L-glutamate + ATP = L-glutamyl 5-phosphate + ADP</text>
        <dbReference type="Rhea" id="RHEA:14877"/>
        <dbReference type="ChEBI" id="CHEBI:29985"/>
        <dbReference type="ChEBI" id="CHEBI:30616"/>
        <dbReference type="ChEBI" id="CHEBI:58274"/>
        <dbReference type="ChEBI" id="CHEBI:456216"/>
        <dbReference type="EC" id="2.7.2.11"/>
    </reaction>
</comment>
<comment type="pathway">
    <text evidence="1">Amino-acid biosynthesis; L-proline biosynthesis; L-glutamate 5-semialdehyde from L-glutamate: step 1/2.</text>
</comment>
<comment type="subcellular location">
    <subcellularLocation>
        <location evidence="1">Cytoplasm</location>
    </subcellularLocation>
</comment>
<comment type="similarity">
    <text evidence="1">Belongs to the glutamate 5-kinase family.</text>
</comment>
<name>PROB_LISMH</name>
<sequence length="276" mass="30059">MRESLKNSKRLVIKVGTSTLMYGNGHINLRTIEKLAMVLSDLRNEGKEVILVSSGAIGVGCHKLQLPVRPTSIPDLQAVASVGQSELMHIYSKFFGEYGQVVGQVLLTRDVTDFPISRENVMNTLDSLLSRGIIPIVNENDTVAVEELEHVTKYGDNDLLSAIVAKLVQADLLIMLSDIDGFYGSNPTTDPDAVMFSEINQITPEIEALAGGRGSKFGTGGMLTKLSAASYCMESNQKMILTNGKNPTVIFNIMQGEQVGTLFASKKEELSHDRTH</sequence>
<protein>
    <recommendedName>
        <fullName evidence="1">Glutamate 5-kinase</fullName>
        <ecNumber evidence="1">2.7.2.11</ecNumber>
    </recommendedName>
    <alternativeName>
        <fullName evidence="1">Gamma-glutamyl kinase</fullName>
        <shortName evidence="1">GK</shortName>
    </alternativeName>
</protein>
<keyword id="KW-0028">Amino-acid biosynthesis</keyword>
<keyword id="KW-0067">ATP-binding</keyword>
<keyword id="KW-0963">Cytoplasm</keyword>
<keyword id="KW-0418">Kinase</keyword>
<keyword id="KW-0547">Nucleotide-binding</keyword>
<keyword id="KW-0641">Proline biosynthesis</keyword>
<keyword id="KW-0808">Transferase</keyword>
<reference key="1">
    <citation type="journal article" date="2011" name="J. Bacteriol.">
        <title>Genome sequence of lineage III Listeria monocytogenes strain HCC23.</title>
        <authorList>
            <person name="Steele C.L."/>
            <person name="Donaldson J.R."/>
            <person name="Paul D."/>
            <person name="Banes M.M."/>
            <person name="Arick T."/>
            <person name="Bridges S.M."/>
            <person name="Lawrence M.L."/>
        </authorList>
    </citation>
    <scope>NUCLEOTIDE SEQUENCE [LARGE SCALE GENOMIC DNA]</scope>
    <source>
        <strain>HCC23</strain>
    </source>
</reference>
<gene>
    <name evidence="1" type="primary">proB</name>
    <name type="ordered locus">LMHCC_1313</name>
</gene>
<accession>B8DHP2</accession>
<dbReference type="EC" id="2.7.2.11" evidence="1"/>
<dbReference type="EMBL" id="CP001175">
    <property type="protein sequence ID" value="ACK39658.1"/>
    <property type="molecule type" value="Genomic_DNA"/>
</dbReference>
<dbReference type="RefSeq" id="WP_003736436.1">
    <property type="nucleotide sequence ID" value="NC_011660.1"/>
</dbReference>
<dbReference type="SMR" id="B8DHP2"/>
<dbReference type="KEGG" id="lmh:LMHCC_1313"/>
<dbReference type="HOGENOM" id="CLU_025400_0_2_9"/>
<dbReference type="UniPathway" id="UPA00098">
    <property type="reaction ID" value="UER00359"/>
</dbReference>
<dbReference type="GO" id="GO:0005829">
    <property type="term" value="C:cytosol"/>
    <property type="evidence" value="ECO:0007669"/>
    <property type="project" value="TreeGrafter"/>
</dbReference>
<dbReference type="GO" id="GO:0005524">
    <property type="term" value="F:ATP binding"/>
    <property type="evidence" value="ECO:0007669"/>
    <property type="project" value="UniProtKB-KW"/>
</dbReference>
<dbReference type="GO" id="GO:0004349">
    <property type="term" value="F:glutamate 5-kinase activity"/>
    <property type="evidence" value="ECO:0007669"/>
    <property type="project" value="UniProtKB-UniRule"/>
</dbReference>
<dbReference type="GO" id="GO:0055129">
    <property type="term" value="P:L-proline biosynthetic process"/>
    <property type="evidence" value="ECO:0007669"/>
    <property type="project" value="UniProtKB-UniRule"/>
</dbReference>
<dbReference type="CDD" id="cd04242">
    <property type="entry name" value="AAK_G5K_ProB"/>
    <property type="match status" value="1"/>
</dbReference>
<dbReference type="FunFam" id="3.40.1160.10:FF:000036">
    <property type="entry name" value="Glutamate 5-kinase"/>
    <property type="match status" value="1"/>
</dbReference>
<dbReference type="Gene3D" id="3.40.1160.10">
    <property type="entry name" value="Acetylglutamate kinase-like"/>
    <property type="match status" value="1"/>
</dbReference>
<dbReference type="HAMAP" id="MF_00456">
    <property type="entry name" value="ProB"/>
    <property type="match status" value="1"/>
</dbReference>
<dbReference type="InterPro" id="IPR036393">
    <property type="entry name" value="AceGlu_kinase-like_sf"/>
</dbReference>
<dbReference type="InterPro" id="IPR001048">
    <property type="entry name" value="Asp/Glu/Uridylate_kinase"/>
</dbReference>
<dbReference type="InterPro" id="IPR041739">
    <property type="entry name" value="G5K_ProB"/>
</dbReference>
<dbReference type="InterPro" id="IPR001057">
    <property type="entry name" value="Glu/AcGlu_kinase"/>
</dbReference>
<dbReference type="InterPro" id="IPR011529">
    <property type="entry name" value="Glu_5kinase"/>
</dbReference>
<dbReference type="InterPro" id="IPR005715">
    <property type="entry name" value="Glu_5kinase/COase_Synthase"/>
</dbReference>
<dbReference type="InterPro" id="IPR019797">
    <property type="entry name" value="Glutamate_5-kinase_CS"/>
</dbReference>
<dbReference type="NCBIfam" id="TIGR01027">
    <property type="entry name" value="proB"/>
    <property type="match status" value="1"/>
</dbReference>
<dbReference type="PANTHER" id="PTHR43654">
    <property type="entry name" value="GLUTAMATE 5-KINASE"/>
    <property type="match status" value="1"/>
</dbReference>
<dbReference type="PANTHER" id="PTHR43654:SF1">
    <property type="entry name" value="ISOPENTENYL PHOSPHATE KINASE"/>
    <property type="match status" value="1"/>
</dbReference>
<dbReference type="Pfam" id="PF00696">
    <property type="entry name" value="AA_kinase"/>
    <property type="match status" value="1"/>
</dbReference>
<dbReference type="PIRSF" id="PIRSF000729">
    <property type="entry name" value="GK"/>
    <property type="match status" value="1"/>
</dbReference>
<dbReference type="PRINTS" id="PR00474">
    <property type="entry name" value="GLU5KINASE"/>
</dbReference>
<dbReference type="SUPFAM" id="SSF53633">
    <property type="entry name" value="Carbamate kinase-like"/>
    <property type="match status" value="1"/>
</dbReference>
<dbReference type="PROSITE" id="PS00902">
    <property type="entry name" value="GLUTAMATE_5_KINASE"/>
    <property type="match status" value="1"/>
</dbReference>